<accession>A5I557</accession>
<accession>A7G6C3</accession>
<evidence type="ECO:0000255" key="1">
    <source>
        <dbReference type="HAMAP-Rule" id="MF_00309"/>
    </source>
</evidence>
<evidence type="ECO:0000305" key="2"/>
<gene>
    <name evidence="1" type="primary">atpA</name>
    <name type="ordered locus">CBO2625</name>
    <name type="ordered locus">CLC_2498</name>
</gene>
<reference key="1">
    <citation type="journal article" date="2007" name="Genome Res.">
        <title>Genome sequence of a proteolytic (Group I) Clostridium botulinum strain Hall A and comparative analysis of the clostridial genomes.</title>
        <authorList>
            <person name="Sebaihia M."/>
            <person name="Peck M.W."/>
            <person name="Minton N.P."/>
            <person name="Thomson N.R."/>
            <person name="Holden M.T.G."/>
            <person name="Mitchell W.J."/>
            <person name="Carter A.T."/>
            <person name="Bentley S.D."/>
            <person name="Mason D.R."/>
            <person name="Crossman L."/>
            <person name="Paul C.J."/>
            <person name="Ivens A."/>
            <person name="Wells-Bennik M.H.J."/>
            <person name="Davis I.J."/>
            <person name="Cerdeno-Tarraga A.M."/>
            <person name="Churcher C."/>
            <person name="Quail M.A."/>
            <person name="Chillingworth T."/>
            <person name="Feltwell T."/>
            <person name="Fraser A."/>
            <person name="Goodhead I."/>
            <person name="Hance Z."/>
            <person name="Jagels K."/>
            <person name="Larke N."/>
            <person name="Maddison M."/>
            <person name="Moule S."/>
            <person name="Mungall K."/>
            <person name="Norbertczak H."/>
            <person name="Rabbinowitsch E."/>
            <person name="Sanders M."/>
            <person name="Simmonds M."/>
            <person name="White B."/>
            <person name="Whithead S."/>
            <person name="Parkhill J."/>
        </authorList>
    </citation>
    <scope>NUCLEOTIDE SEQUENCE [LARGE SCALE GENOMIC DNA]</scope>
    <source>
        <strain>Hall / ATCC 3502 / NCTC 13319 / Type A</strain>
    </source>
</reference>
<reference key="2">
    <citation type="journal article" date="2007" name="PLoS ONE">
        <title>Analysis of the neurotoxin complex genes in Clostridium botulinum A1-A4 and B1 strains: BoNT/A3, /Ba4 and /B1 clusters are located within plasmids.</title>
        <authorList>
            <person name="Smith T.J."/>
            <person name="Hill K.K."/>
            <person name="Foley B.T."/>
            <person name="Detter J.C."/>
            <person name="Munk A.C."/>
            <person name="Bruce D.C."/>
            <person name="Doggett N.A."/>
            <person name="Smith L.A."/>
            <person name="Marks J.D."/>
            <person name="Xie G."/>
            <person name="Brettin T.S."/>
        </authorList>
    </citation>
    <scope>NUCLEOTIDE SEQUENCE [LARGE SCALE GENOMIC DNA]</scope>
    <source>
        <strain>Hall / ATCC 3502 / NCTC 13319 / Type A</strain>
    </source>
</reference>
<comment type="function">
    <text evidence="1">Produces ATP from ADP in the presence of a proton gradient across the membrane. The V-type alpha chain is a catalytic subunit.</text>
</comment>
<comment type="catalytic activity">
    <reaction evidence="1">
        <text>ATP + H2O + 4 H(+)(in) = ADP + phosphate + 5 H(+)(out)</text>
        <dbReference type="Rhea" id="RHEA:57720"/>
        <dbReference type="ChEBI" id="CHEBI:15377"/>
        <dbReference type="ChEBI" id="CHEBI:15378"/>
        <dbReference type="ChEBI" id="CHEBI:30616"/>
        <dbReference type="ChEBI" id="CHEBI:43474"/>
        <dbReference type="ChEBI" id="CHEBI:456216"/>
        <dbReference type="EC" id="7.1.2.2"/>
    </reaction>
</comment>
<comment type="similarity">
    <text evidence="1">Belongs to the ATPase alpha/beta chains family.</text>
</comment>
<comment type="sequence caution" evidence="2">
    <conflict type="erroneous initiation">
        <sequence resource="EMBL-CDS" id="ABS38064"/>
    </conflict>
</comment>
<comment type="sequence caution" evidence="2">
    <conflict type="erroneous initiation">
        <sequence resource="EMBL-CDS" id="CAL84184"/>
    </conflict>
</comment>
<protein>
    <recommendedName>
        <fullName evidence="1">V-type ATP synthase alpha chain</fullName>
        <ecNumber evidence="1">7.1.2.2</ecNumber>
    </recommendedName>
    <alternativeName>
        <fullName evidence="1">V-ATPase subunit A</fullName>
    </alternativeName>
</protein>
<proteinExistence type="inferred from homology"/>
<keyword id="KW-0066">ATP synthesis</keyword>
<keyword id="KW-0067">ATP-binding</keyword>
<keyword id="KW-0375">Hydrogen ion transport</keyword>
<keyword id="KW-0406">Ion transport</keyword>
<keyword id="KW-0547">Nucleotide-binding</keyword>
<keyword id="KW-1185">Reference proteome</keyword>
<keyword id="KW-1278">Translocase</keyword>
<keyword id="KW-0813">Transport</keyword>
<organism>
    <name type="scientific">Clostridium botulinum (strain Hall / ATCC 3502 / NCTC 13319 / Type A)</name>
    <dbReference type="NCBI Taxonomy" id="441771"/>
    <lineage>
        <taxon>Bacteria</taxon>
        <taxon>Bacillati</taxon>
        <taxon>Bacillota</taxon>
        <taxon>Clostridia</taxon>
        <taxon>Eubacteriales</taxon>
        <taxon>Clostridiaceae</taxon>
        <taxon>Clostridium</taxon>
    </lineage>
</organism>
<sequence>MKTGRVLKISGPLVVAEGMEEANIYDVVKVGEKRLIGEIIEMREDRASIQVYEETAGLAPGDPVITTGEPLSVELGPGLIEAMFDGIQRPLNAIKAKAGDFITKGVEVHSLDRDKKWHFTPVKKVGDTVEAGDVIGIVQETSIVEHKIMVPYGIKGTIETIEEGDFTVVDTVAKVKDKDKVSDLMMMQKWPVRRGRPYGRKLNPAQPMITGQRVIDTFFPVTKGGTACVPGPFGSGKTVVQHQLAKWADAQIVVYIGCGERGNEMTDVLNEFPELKDPKTGEPLMKRTVLIANTSNMPVAAREASIYTGITIGEYFRDMGYSIALMADSTSRWAEALREMSGRLEEMPGDEGYPAYLGSRAAEFYERAGNVVSIGSEEREGALTVIGAVSPPGGDLSEPVTQATLRIVKVFWGLDAQLAYRRHFPAINWLNSYSLYIEKISPWMDENVASDWTALRIKAMSLLQEEASLEEIVRLVGIDALSEKDRLKLEVAKSLREDYLQQNAFHEVDTYASLGKQYKMLKLVLFFYDEAQRALNAGVYLKELLDLEVRDKIARAKYISEENIENIDAIFNELSEVIDQLISKGGIMNA</sequence>
<dbReference type="EC" id="7.1.2.2" evidence="1"/>
<dbReference type="EMBL" id="CP000727">
    <property type="protein sequence ID" value="ABS38064.1"/>
    <property type="status" value="ALT_INIT"/>
    <property type="molecule type" value="Genomic_DNA"/>
</dbReference>
<dbReference type="EMBL" id="AM412317">
    <property type="protein sequence ID" value="CAL84184.1"/>
    <property type="status" value="ALT_INIT"/>
    <property type="molecule type" value="Genomic_DNA"/>
</dbReference>
<dbReference type="RefSeq" id="WP_033047490.1">
    <property type="nucleotide sequence ID" value="NC_009698.1"/>
</dbReference>
<dbReference type="RefSeq" id="YP_001255122.1">
    <property type="nucleotide sequence ID" value="NC_009495.1"/>
</dbReference>
<dbReference type="RefSeq" id="YP_001388338.1">
    <property type="nucleotide sequence ID" value="NC_009698.1"/>
</dbReference>
<dbReference type="SMR" id="A5I557"/>
<dbReference type="GeneID" id="5187881"/>
<dbReference type="KEGG" id="cbh:CLC_2498"/>
<dbReference type="KEGG" id="cbo:CBO2625"/>
<dbReference type="PATRIC" id="fig|413999.7.peg.2607"/>
<dbReference type="HOGENOM" id="CLU_008162_3_1_9"/>
<dbReference type="PRO" id="PR:A5I557"/>
<dbReference type="Proteomes" id="UP000001986">
    <property type="component" value="Chromosome"/>
</dbReference>
<dbReference type="GO" id="GO:0045259">
    <property type="term" value="C:proton-transporting ATP synthase complex"/>
    <property type="evidence" value="ECO:0007669"/>
    <property type="project" value="UniProtKB-ARBA"/>
</dbReference>
<dbReference type="GO" id="GO:0005524">
    <property type="term" value="F:ATP binding"/>
    <property type="evidence" value="ECO:0007669"/>
    <property type="project" value="UniProtKB-UniRule"/>
</dbReference>
<dbReference type="GO" id="GO:0046933">
    <property type="term" value="F:proton-transporting ATP synthase activity, rotational mechanism"/>
    <property type="evidence" value="ECO:0007669"/>
    <property type="project" value="UniProtKB-UniRule"/>
</dbReference>
<dbReference type="GO" id="GO:0046961">
    <property type="term" value="F:proton-transporting ATPase activity, rotational mechanism"/>
    <property type="evidence" value="ECO:0000318"/>
    <property type="project" value="GO_Central"/>
</dbReference>
<dbReference type="GO" id="GO:0042777">
    <property type="term" value="P:proton motive force-driven plasma membrane ATP synthesis"/>
    <property type="evidence" value="ECO:0007669"/>
    <property type="project" value="UniProtKB-UniRule"/>
</dbReference>
<dbReference type="GO" id="GO:1902600">
    <property type="term" value="P:proton transmembrane transport"/>
    <property type="evidence" value="ECO:0000318"/>
    <property type="project" value="GO_Central"/>
</dbReference>
<dbReference type="CDD" id="cd18111">
    <property type="entry name" value="ATP-synt_V_A-type_alpha_C"/>
    <property type="match status" value="1"/>
</dbReference>
<dbReference type="CDD" id="cd18119">
    <property type="entry name" value="ATP-synt_V_A-type_alpha_N"/>
    <property type="match status" value="1"/>
</dbReference>
<dbReference type="CDD" id="cd01134">
    <property type="entry name" value="V_A-ATPase_A"/>
    <property type="match status" value="1"/>
</dbReference>
<dbReference type="FunFam" id="3.40.50.300:FF:000675">
    <property type="entry name" value="V-type ATP synthase alpha chain"/>
    <property type="match status" value="1"/>
</dbReference>
<dbReference type="FunFam" id="1.10.1140.10:FF:000002">
    <property type="entry name" value="V-type proton ATPase catalytic subunit A"/>
    <property type="match status" value="1"/>
</dbReference>
<dbReference type="FunFam" id="2.40.30.20:FF:000002">
    <property type="entry name" value="V-type proton ATPase catalytic subunit A"/>
    <property type="match status" value="1"/>
</dbReference>
<dbReference type="FunFam" id="2.40.50.100:FF:000008">
    <property type="entry name" value="V-type proton ATPase catalytic subunit A"/>
    <property type="match status" value="1"/>
</dbReference>
<dbReference type="Gene3D" id="2.40.30.20">
    <property type="match status" value="1"/>
</dbReference>
<dbReference type="Gene3D" id="2.40.50.100">
    <property type="match status" value="1"/>
</dbReference>
<dbReference type="Gene3D" id="1.10.1140.10">
    <property type="entry name" value="Bovine Mitochondrial F1-atpase, Atp Synthase Beta Chain, Chain D, domain 3"/>
    <property type="match status" value="1"/>
</dbReference>
<dbReference type="Gene3D" id="3.40.50.300">
    <property type="entry name" value="P-loop containing nucleotide triphosphate hydrolases"/>
    <property type="match status" value="1"/>
</dbReference>
<dbReference type="HAMAP" id="MF_00309">
    <property type="entry name" value="ATP_synth_A_arch"/>
    <property type="match status" value="1"/>
</dbReference>
<dbReference type="InterPro" id="IPR055190">
    <property type="entry name" value="ATP-synt_VA_C"/>
</dbReference>
<dbReference type="InterPro" id="IPR031686">
    <property type="entry name" value="ATP-synth_a_Xtn"/>
</dbReference>
<dbReference type="InterPro" id="IPR023366">
    <property type="entry name" value="ATP_synth_asu-like_sf"/>
</dbReference>
<dbReference type="InterPro" id="IPR020003">
    <property type="entry name" value="ATPase_a/bsu_AS"/>
</dbReference>
<dbReference type="InterPro" id="IPR004100">
    <property type="entry name" value="ATPase_F1/V1/A1_a/bsu_N"/>
</dbReference>
<dbReference type="InterPro" id="IPR036121">
    <property type="entry name" value="ATPase_F1/V1/A1_a/bsu_N_sf"/>
</dbReference>
<dbReference type="InterPro" id="IPR000194">
    <property type="entry name" value="ATPase_F1/V1/A1_a/bsu_nucl-bd"/>
</dbReference>
<dbReference type="InterPro" id="IPR024034">
    <property type="entry name" value="ATPase_F1/V1_b/a_C"/>
</dbReference>
<dbReference type="InterPro" id="IPR027417">
    <property type="entry name" value="P-loop_NTPase"/>
</dbReference>
<dbReference type="InterPro" id="IPR022878">
    <property type="entry name" value="V-ATPase_asu"/>
</dbReference>
<dbReference type="NCBIfam" id="NF003220">
    <property type="entry name" value="PRK04192.1"/>
    <property type="match status" value="1"/>
</dbReference>
<dbReference type="PANTHER" id="PTHR43607:SF1">
    <property type="entry name" value="H(+)-TRANSPORTING TWO-SECTOR ATPASE"/>
    <property type="match status" value="1"/>
</dbReference>
<dbReference type="PANTHER" id="PTHR43607">
    <property type="entry name" value="V-TYPE PROTON ATPASE CATALYTIC SUBUNIT A"/>
    <property type="match status" value="1"/>
</dbReference>
<dbReference type="Pfam" id="PF00006">
    <property type="entry name" value="ATP-synt_ab"/>
    <property type="match status" value="1"/>
</dbReference>
<dbReference type="Pfam" id="PF02874">
    <property type="entry name" value="ATP-synt_ab_N"/>
    <property type="match status" value="1"/>
</dbReference>
<dbReference type="Pfam" id="PF16886">
    <property type="entry name" value="ATP-synt_ab_Xtn"/>
    <property type="match status" value="1"/>
</dbReference>
<dbReference type="Pfam" id="PF22919">
    <property type="entry name" value="ATP-synt_VA_C"/>
    <property type="match status" value="1"/>
</dbReference>
<dbReference type="SUPFAM" id="SSF47917">
    <property type="entry name" value="C-terminal domain of alpha and beta subunits of F1 ATP synthase"/>
    <property type="match status" value="1"/>
</dbReference>
<dbReference type="SUPFAM" id="SSF50615">
    <property type="entry name" value="N-terminal domain of alpha and beta subunits of F1 ATP synthase"/>
    <property type="match status" value="1"/>
</dbReference>
<dbReference type="SUPFAM" id="SSF52540">
    <property type="entry name" value="P-loop containing nucleoside triphosphate hydrolases"/>
    <property type="match status" value="1"/>
</dbReference>
<dbReference type="PROSITE" id="PS00152">
    <property type="entry name" value="ATPASE_ALPHA_BETA"/>
    <property type="match status" value="1"/>
</dbReference>
<feature type="chain" id="PRO_0000322461" description="V-type ATP synthase alpha chain">
    <location>
        <begin position="1"/>
        <end position="590"/>
    </location>
</feature>
<feature type="binding site" evidence="1">
    <location>
        <begin position="231"/>
        <end position="238"/>
    </location>
    <ligand>
        <name>ATP</name>
        <dbReference type="ChEBI" id="CHEBI:30616"/>
    </ligand>
</feature>
<name>VATA_CLOBH</name>